<accession>Q03GG4</accession>
<comment type="catalytic activity">
    <reaction evidence="1">
        <text>tRNA(Leu) + L-leucine + ATP = L-leucyl-tRNA(Leu) + AMP + diphosphate</text>
        <dbReference type="Rhea" id="RHEA:11688"/>
        <dbReference type="Rhea" id="RHEA-COMP:9613"/>
        <dbReference type="Rhea" id="RHEA-COMP:9622"/>
        <dbReference type="ChEBI" id="CHEBI:30616"/>
        <dbReference type="ChEBI" id="CHEBI:33019"/>
        <dbReference type="ChEBI" id="CHEBI:57427"/>
        <dbReference type="ChEBI" id="CHEBI:78442"/>
        <dbReference type="ChEBI" id="CHEBI:78494"/>
        <dbReference type="ChEBI" id="CHEBI:456215"/>
        <dbReference type="EC" id="6.1.1.4"/>
    </reaction>
</comment>
<comment type="subcellular location">
    <subcellularLocation>
        <location evidence="1">Cytoplasm</location>
    </subcellularLocation>
</comment>
<comment type="similarity">
    <text evidence="1">Belongs to the class-I aminoacyl-tRNA synthetase family.</text>
</comment>
<reference key="1">
    <citation type="journal article" date="2006" name="Proc. Natl. Acad. Sci. U.S.A.">
        <title>Comparative genomics of the lactic acid bacteria.</title>
        <authorList>
            <person name="Makarova K.S."/>
            <person name="Slesarev A."/>
            <person name="Wolf Y.I."/>
            <person name="Sorokin A."/>
            <person name="Mirkin B."/>
            <person name="Koonin E.V."/>
            <person name="Pavlov A."/>
            <person name="Pavlova N."/>
            <person name="Karamychev V."/>
            <person name="Polouchine N."/>
            <person name="Shakhova V."/>
            <person name="Grigoriev I."/>
            <person name="Lou Y."/>
            <person name="Rohksar D."/>
            <person name="Lucas S."/>
            <person name="Huang K."/>
            <person name="Goodstein D.M."/>
            <person name="Hawkins T."/>
            <person name="Plengvidhya V."/>
            <person name="Welker D."/>
            <person name="Hughes J."/>
            <person name="Goh Y."/>
            <person name="Benson A."/>
            <person name="Baldwin K."/>
            <person name="Lee J.-H."/>
            <person name="Diaz-Muniz I."/>
            <person name="Dosti B."/>
            <person name="Smeianov V."/>
            <person name="Wechter W."/>
            <person name="Barabote R."/>
            <person name="Lorca G."/>
            <person name="Altermann E."/>
            <person name="Barrangou R."/>
            <person name="Ganesan B."/>
            <person name="Xie Y."/>
            <person name="Rawsthorne H."/>
            <person name="Tamir D."/>
            <person name="Parker C."/>
            <person name="Breidt F."/>
            <person name="Broadbent J.R."/>
            <person name="Hutkins R."/>
            <person name="O'Sullivan D."/>
            <person name="Steele J."/>
            <person name="Unlu G."/>
            <person name="Saier M.H. Jr."/>
            <person name="Klaenhammer T."/>
            <person name="Richardson P."/>
            <person name="Kozyavkin S."/>
            <person name="Weimer B.C."/>
            <person name="Mills D.A."/>
        </authorList>
    </citation>
    <scope>NUCLEOTIDE SEQUENCE [LARGE SCALE GENOMIC DNA]</scope>
    <source>
        <strain>ATCC 25745 / CCUG 21536 / LMG 10740 / 183-1w</strain>
    </source>
</reference>
<keyword id="KW-0030">Aminoacyl-tRNA synthetase</keyword>
<keyword id="KW-0067">ATP-binding</keyword>
<keyword id="KW-0963">Cytoplasm</keyword>
<keyword id="KW-0436">Ligase</keyword>
<keyword id="KW-0547">Nucleotide-binding</keyword>
<keyword id="KW-0648">Protein biosynthesis</keyword>
<evidence type="ECO:0000255" key="1">
    <source>
        <dbReference type="HAMAP-Rule" id="MF_00049"/>
    </source>
</evidence>
<feature type="chain" id="PRO_1000009386" description="Leucine--tRNA ligase">
    <location>
        <begin position="1"/>
        <end position="805"/>
    </location>
</feature>
<feature type="short sequence motif" description="'HIGH' region">
    <location>
        <begin position="40"/>
        <end position="51"/>
    </location>
</feature>
<feature type="short sequence motif" description="'KMSKS' region">
    <location>
        <begin position="577"/>
        <end position="581"/>
    </location>
</feature>
<feature type="binding site" evidence="1">
    <location>
        <position position="580"/>
    </location>
    <ligand>
        <name>ATP</name>
        <dbReference type="ChEBI" id="CHEBI:30616"/>
    </ligand>
</feature>
<name>SYL_PEDPA</name>
<organism>
    <name type="scientific">Pediococcus pentosaceus (strain ATCC 25745 / CCUG 21536 / LMG 10740 / 183-1w)</name>
    <dbReference type="NCBI Taxonomy" id="278197"/>
    <lineage>
        <taxon>Bacteria</taxon>
        <taxon>Bacillati</taxon>
        <taxon>Bacillota</taxon>
        <taxon>Bacilli</taxon>
        <taxon>Lactobacillales</taxon>
        <taxon>Lactobacillaceae</taxon>
        <taxon>Pediococcus</taxon>
    </lineage>
</organism>
<dbReference type="EC" id="6.1.1.4" evidence="1"/>
<dbReference type="EMBL" id="CP000422">
    <property type="protein sequence ID" value="ABJ67708.1"/>
    <property type="molecule type" value="Genomic_DNA"/>
</dbReference>
<dbReference type="RefSeq" id="WP_002833746.1">
    <property type="nucleotide sequence ID" value="NC_008525.1"/>
</dbReference>
<dbReference type="SMR" id="Q03GG4"/>
<dbReference type="STRING" id="278197.PEPE_0645"/>
<dbReference type="GeneID" id="33062531"/>
<dbReference type="KEGG" id="ppe:PEPE_0645"/>
<dbReference type="eggNOG" id="COG0495">
    <property type="taxonomic scope" value="Bacteria"/>
</dbReference>
<dbReference type="HOGENOM" id="CLU_004427_0_0_9"/>
<dbReference type="OrthoDB" id="9810365at2"/>
<dbReference type="Proteomes" id="UP000000773">
    <property type="component" value="Chromosome"/>
</dbReference>
<dbReference type="GO" id="GO:0005829">
    <property type="term" value="C:cytosol"/>
    <property type="evidence" value="ECO:0007669"/>
    <property type="project" value="TreeGrafter"/>
</dbReference>
<dbReference type="GO" id="GO:0002161">
    <property type="term" value="F:aminoacyl-tRNA deacylase activity"/>
    <property type="evidence" value="ECO:0007669"/>
    <property type="project" value="InterPro"/>
</dbReference>
<dbReference type="GO" id="GO:0005524">
    <property type="term" value="F:ATP binding"/>
    <property type="evidence" value="ECO:0007669"/>
    <property type="project" value="UniProtKB-UniRule"/>
</dbReference>
<dbReference type="GO" id="GO:0004823">
    <property type="term" value="F:leucine-tRNA ligase activity"/>
    <property type="evidence" value="ECO:0007669"/>
    <property type="project" value="UniProtKB-UniRule"/>
</dbReference>
<dbReference type="GO" id="GO:0006429">
    <property type="term" value="P:leucyl-tRNA aminoacylation"/>
    <property type="evidence" value="ECO:0007669"/>
    <property type="project" value="UniProtKB-UniRule"/>
</dbReference>
<dbReference type="CDD" id="cd07958">
    <property type="entry name" value="Anticodon_Ia_Leu_BEm"/>
    <property type="match status" value="1"/>
</dbReference>
<dbReference type="CDD" id="cd00812">
    <property type="entry name" value="LeuRS_core"/>
    <property type="match status" value="1"/>
</dbReference>
<dbReference type="FunFam" id="3.10.20.590:FF:000001">
    <property type="entry name" value="Leucine--tRNA ligase"/>
    <property type="match status" value="1"/>
</dbReference>
<dbReference type="FunFam" id="3.40.50.620:FF:000056">
    <property type="entry name" value="Leucine--tRNA ligase"/>
    <property type="match status" value="1"/>
</dbReference>
<dbReference type="FunFam" id="3.40.50.620:FF:000077">
    <property type="entry name" value="Leucine--tRNA ligase"/>
    <property type="match status" value="1"/>
</dbReference>
<dbReference type="FunFam" id="1.10.730.10:FF:000011">
    <property type="entry name" value="Leucine--tRNA ligase chloroplastic/mitochondrial"/>
    <property type="match status" value="1"/>
</dbReference>
<dbReference type="Gene3D" id="3.10.20.590">
    <property type="match status" value="1"/>
</dbReference>
<dbReference type="Gene3D" id="3.40.50.620">
    <property type="entry name" value="HUPs"/>
    <property type="match status" value="2"/>
</dbReference>
<dbReference type="Gene3D" id="1.10.730.10">
    <property type="entry name" value="Isoleucyl-tRNA Synthetase, Domain 1"/>
    <property type="match status" value="1"/>
</dbReference>
<dbReference type="Gene3D" id="3.90.740.10">
    <property type="entry name" value="Valyl/Leucyl/Isoleucyl-tRNA synthetase, editing domain"/>
    <property type="match status" value="1"/>
</dbReference>
<dbReference type="HAMAP" id="MF_00049_B">
    <property type="entry name" value="Leu_tRNA_synth_B"/>
    <property type="match status" value="1"/>
</dbReference>
<dbReference type="InterPro" id="IPR001412">
    <property type="entry name" value="aa-tRNA-synth_I_CS"/>
</dbReference>
<dbReference type="InterPro" id="IPR002300">
    <property type="entry name" value="aa-tRNA-synth_Ia"/>
</dbReference>
<dbReference type="InterPro" id="IPR002302">
    <property type="entry name" value="Leu-tRNA-ligase"/>
</dbReference>
<dbReference type="InterPro" id="IPR025709">
    <property type="entry name" value="Leu_tRNA-synth_edit"/>
</dbReference>
<dbReference type="InterPro" id="IPR013155">
    <property type="entry name" value="M/V/L/I-tRNA-synth_anticd-bd"/>
</dbReference>
<dbReference type="InterPro" id="IPR015413">
    <property type="entry name" value="Methionyl/Leucyl_tRNA_Synth"/>
</dbReference>
<dbReference type="InterPro" id="IPR014729">
    <property type="entry name" value="Rossmann-like_a/b/a_fold"/>
</dbReference>
<dbReference type="InterPro" id="IPR009080">
    <property type="entry name" value="tRNAsynth_Ia_anticodon-bd"/>
</dbReference>
<dbReference type="InterPro" id="IPR009008">
    <property type="entry name" value="Val/Leu/Ile-tRNA-synth_edit"/>
</dbReference>
<dbReference type="NCBIfam" id="TIGR00396">
    <property type="entry name" value="leuS_bact"/>
    <property type="match status" value="1"/>
</dbReference>
<dbReference type="PANTHER" id="PTHR43740:SF2">
    <property type="entry name" value="LEUCINE--TRNA LIGASE, MITOCHONDRIAL"/>
    <property type="match status" value="1"/>
</dbReference>
<dbReference type="PANTHER" id="PTHR43740">
    <property type="entry name" value="LEUCYL-TRNA SYNTHETASE"/>
    <property type="match status" value="1"/>
</dbReference>
<dbReference type="Pfam" id="PF08264">
    <property type="entry name" value="Anticodon_1"/>
    <property type="match status" value="1"/>
</dbReference>
<dbReference type="Pfam" id="PF00133">
    <property type="entry name" value="tRNA-synt_1"/>
    <property type="match status" value="1"/>
</dbReference>
<dbReference type="Pfam" id="PF13603">
    <property type="entry name" value="tRNA-synt_1_2"/>
    <property type="match status" value="1"/>
</dbReference>
<dbReference type="Pfam" id="PF09334">
    <property type="entry name" value="tRNA-synt_1g"/>
    <property type="match status" value="1"/>
</dbReference>
<dbReference type="PRINTS" id="PR00985">
    <property type="entry name" value="TRNASYNTHLEU"/>
</dbReference>
<dbReference type="SUPFAM" id="SSF47323">
    <property type="entry name" value="Anticodon-binding domain of a subclass of class I aminoacyl-tRNA synthetases"/>
    <property type="match status" value="1"/>
</dbReference>
<dbReference type="SUPFAM" id="SSF52374">
    <property type="entry name" value="Nucleotidylyl transferase"/>
    <property type="match status" value="1"/>
</dbReference>
<dbReference type="SUPFAM" id="SSF50677">
    <property type="entry name" value="ValRS/IleRS/LeuRS editing domain"/>
    <property type="match status" value="1"/>
</dbReference>
<dbReference type="PROSITE" id="PS00178">
    <property type="entry name" value="AA_TRNA_LIGASE_I"/>
    <property type="match status" value="1"/>
</dbReference>
<protein>
    <recommendedName>
        <fullName evidence="1">Leucine--tRNA ligase</fullName>
        <ecNumber evidence="1">6.1.1.4</ecNumber>
    </recommendedName>
    <alternativeName>
        <fullName evidence="1">Leucyl-tRNA synthetase</fullName>
        <shortName evidence="1">LeuRS</shortName>
    </alternativeName>
</protein>
<proteinExistence type="inferred from homology"/>
<gene>
    <name evidence="1" type="primary">leuS</name>
    <name type="ordered locus">PEPE_0645</name>
</gene>
<sequence>MAYNHKDIEQKWQQFWSDNETFKTVEDADKPKYYALDMFPYPSGQGLHVGHPEGYTATDIMSRMKRMQGYKVLHPMGWDAFGLPAEQYAMKTGNNPRDFTAKNIQNFKRQIQSLGFSYDWSREVNTTDPAYYKWTQWIFEQLYKKGLAYEKETLVNWAPDLMGGTVVANEEVVDGKTERGGFPVYRKPMKQWILKITAYADRLIDDLDLVDWPDSIKEMQKNWIGRSVGASVFFNVEDSEKQIEVFTTRPDTLFGATYLVISPEHDLVDQITTPESKAAVEEYKKAVATKSDLERTDLNKDKTGVFTGAYAVNPVNGKKIPVWISDYVLASYGTGAVMAVPAHDGRDYEFAKKFKIDMVPVYEGGNLEDGVLDSEGGLINSGFLDGMDKQTAIDTMISWLEEHGVGHKKVNYRLRDWVFSRQRYWGEPIPVIHWEDGETTLIPEDELPLRLPAATDIRPSGTGESPLANLDDWVNVVDENGRKGRRETNTMPQWAGSSWYFLRYVDPKNDQKIADEDLLKEWLPVDLYVGGAEHAVLHLLYARFWHKVLYDLGVVPTKEPFQKLVNQGMILGSNHEKMSKSKGNVVNPDDIVERFGADTLRLYEMFMGPLTESVAWSEDGLNGSRKWIDRVWRLMIDDENQLRDHIVTENDGSLDMIYNQTVKKVTDDYENMRFNTAISQMMVFVNEAYKADKLPAVYMEGLVKMLAPIIPHVAEELWSLLGHEGGISYAEWPTYDESKLVEATVQVILQVNGKVRSKITVDKDIAKEELEKLALADAKIQQWTADKTVRKVIVIPNKIVNIVVG</sequence>